<name>ATI3_VACCC</name>
<feature type="chain" id="PRO_0000099275" description="7 kDa A-type inclusion protein">
    <location>
        <begin position="1"/>
        <end position="65"/>
    </location>
</feature>
<feature type="region of interest" description="Disordered" evidence="1">
    <location>
        <begin position="1"/>
        <end position="31"/>
    </location>
</feature>
<feature type="compositionally biased region" description="Polar residues" evidence="1">
    <location>
        <begin position="1"/>
        <end position="20"/>
    </location>
</feature>
<dbReference type="EMBL" id="M35027">
    <property type="protein sequence ID" value="AAA48150.1"/>
    <property type="molecule type" value="Genomic_DNA"/>
</dbReference>
<dbReference type="PIR" id="I42519">
    <property type="entry name" value="WMVZ9T"/>
</dbReference>
<dbReference type="SMR" id="P21113"/>
<dbReference type="Proteomes" id="UP000008269">
    <property type="component" value="Segment"/>
</dbReference>
<keyword id="KW-1185">Reference proteome</keyword>
<sequence>MSNQNIPQLSEYQTSVSQVAVTPPPKPETPQIFEYQTSDSIVNNPRPFYNSDLEFDDIDMYLLPN</sequence>
<reference key="1">
    <citation type="journal article" date="1990" name="Virology">
        <title>The complete DNA sequence of vaccinia virus.</title>
        <authorList>
            <person name="Goebel S.J."/>
            <person name="Johnson G.P."/>
            <person name="Perkus M.E."/>
            <person name="Davis S.W."/>
            <person name="Winslow J.P."/>
            <person name="Paoletti E."/>
        </authorList>
    </citation>
    <scope>NUCLEOTIDE SEQUENCE [LARGE SCALE GENOMIC DNA]</scope>
</reference>
<reference key="2">
    <citation type="journal article" date="1990" name="Virology">
        <title>Appendix to 'The complete DNA sequence of vaccinia virus'.</title>
        <authorList>
            <person name="Goebel S.J."/>
            <person name="Johnson G.P."/>
            <person name="Perkus M.E."/>
            <person name="Davis S.W."/>
            <person name="Winslow J.P."/>
            <person name="Paoletti E."/>
        </authorList>
    </citation>
    <scope>NUCLEOTIDE SEQUENCE [LARGE SCALE GENOMIC DNA]</scope>
</reference>
<evidence type="ECO:0000256" key="1">
    <source>
        <dbReference type="SAM" id="MobiDB-lite"/>
    </source>
</evidence>
<accession>P21113</accession>
<protein>
    <recommendedName>
        <fullName>7 kDa A-type inclusion protein</fullName>
    </recommendedName>
</protein>
<organism>
    <name type="scientific">Vaccinia virus (strain Copenhagen)</name>
    <name type="common">VACV</name>
    <dbReference type="NCBI Taxonomy" id="10249"/>
    <lineage>
        <taxon>Viruses</taxon>
        <taxon>Varidnaviria</taxon>
        <taxon>Bamfordvirae</taxon>
        <taxon>Nucleocytoviricota</taxon>
        <taxon>Pokkesviricetes</taxon>
        <taxon>Chitovirales</taxon>
        <taxon>Poxviridae</taxon>
        <taxon>Chordopoxvirinae</taxon>
        <taxon>Orthopoxvirus</taxon>
        <taxon>Vaccinia virus</taxon>
    </lineage>
</organism>
<proteinExistence type="predicted"/>
<organismHost>
    <name type="scientific">Homo sapiens</name>
    <name type="common">Human</name>
    <dbReference type="NCBI Taxonomy" id="9606"/>
</organismHost>